<feature type="chain" id="PRO_0000419944" description="Protein GLUTAMINE DUMPER 6">
    <location>
        <begin position="1"/>
        <end position="111"/>
    </location>
</feature>
<feature type="topological domain" description="Extracellular" evidence="2">
    <location>
        <begin position="1"/>
        <end position="16"/>
    </location>
</feature>
<feature type="transmembrane region" description="Helical" evidence="2">
    <location>
        <begin position="17"/>
        <end position="37"/>
    </location>
</feature>
<feature type="topological domain" description="Cytoplasmic" evidence="2">
    <location>
        <begin position="38"/>
        <end position="111"/>
    </location>
</feature>
<feature type="region of interest" description="Disordered" evidence="3">
    <location>
        <begin position="40"/>
        <end position="63"/>
    </location>
</feature>
<feature type="short sequence motif" description="VIMAG; degenerate">
    <location>
        <begin position="75"/>
        <end position="79"/>
    </location>
</feature>
<feature type="compositionally biased region" description="Polar residues" evidence="3">
    <location>
        <begin position="40"/>
        <end position="49"/>
    </location>
</feature>
<reference key="1">
    <citation type="journal article" date="2000" name="DNA Res.">
        <title>Structural analysis of Arabidopsis thaliana chromosome 3. II. Sequence features of the 4,251,695 bp regions covered by 90 P1, TAC and BAC clones.</title>
        <authorList>
            <person name="Kaneko T."/>
            <person name="Katoh T."/>
            <person name="Sato S."/>
            <person name="Nakamura Y."/>
            <person name="Asamizu E."/>
            <person name="Tabata S."/>
        </authorList>
    </citation>
    <scope>NUCLEOTIDE SEQUENCE [LARGE SCALE GENOMIC DNA]</scope>
    <source>
        <strain>cv. Columbia</strain>
    </source>
</reference>
<reference key="2">
    <citation type="journal article" date="2017" name="Plant J.">
        <title>Araport11: a complete reannotation of the Arabidopsis thaliana reference genome.</title>
        <authorList>
            <person name="Cheng C.Y."/>
            <person name="Krishnakumar V."/>
            <person name="Chan A.P."/>
            <person name="Thibaud-Nissen F."/>
            <person name="Schobel S."/>
            <person name="Town C.D."/>
        </authorList>
    </citation>
    <scope>GENOME REANNOTATION</scope>
    <source>
        <strain>cv. Columbia</strain>
    </source>
</reference>
<reference key="3">
    <citation type="journal article" date="2004" name="Plant Cell">
        <title>Overexpression of GLUTAMINE DUMPER1 leads to hypersecretion of glutamine from hydathodes of Arabidopsis leaves.</title>
        <authorList>
            <person name="Pilot G."/>
            <person name="Stransky H."/>
            <person name="Bushey D.F."/>
            <person name="Pratelli R."/>
            <person name="Ludewig U."/>
            <person name="Wingate V.P."/>
            <person name="Frommer W.B."/>
        </authorList>
    </citation>
    <scope>GENE FAMILY</scope>
</reference>
<reference key="4">
    <citation type="journal article" date="2006" name="FEBS Lett.">
        <title>The plant-specific VIMAG domain of Glutamine Dumper1 is necessary for the function of the protein in Arabidopsis.</title>
        <authorList>
            <person name="Pratelli R."/>
            <person name="Pilot G."/>
        </authorList>
    </citation>
    <scope>GENE FAMILY</scope>
</reference>
<reference key="5">
    <citation type="journal article" date="2007" name="FEBS Lett.">
        <authorList>
            <person name="Pratelli R."/>
            <person name="Pilot G."/>
        </authorList>
    </citation>
    <scope>ERRATUM OF PUBMED:17157837</scope>
</reference>
<reference key="6">
    <citation type="book" date="2008" name="Proceedings of the 19th international conference on Arabidopsis research">
        <title>The over-expression of GDU-like genes leads to modification in amino acid content and transport.</title>
        <authorList>
            <person name="Pratelli R."/>
            <person name="Frommer W.B."/>
            <person name="Pilot G."/>
        </authorList>
    </citation>
    <scope>FUNCTION</scope>
    <scope>TISSUE SPECIFICITY</scope>
    <scope>SUBCELLULAR LOCATION</scope>
</reference>
<reference key="7">
    <citation type="journal article" date="2010" name="Plant Physiol.">
        <title>Stimulation of nonselective amino acid export by glutamine dumper proteins.</title>
        <authorList>
            <person name="Pratelli R."/>
            <person name="Voll L.M."/>
            <person name="Horst R.J."/>
            <person name="Frommer W.B."/>
            <person name="Pilot G."/>
        </authorList>
    </citation>
    <scope>FUNCTION</scope>
    <scope>TISSUE SPECIFICITY</scope>
</reference>
<organism>
    <name type="scientific">Arabidopsis thaliana</name>
    <name type="common">Mouse-ear cress</name>
    <dbReference type="NCBI Taxonomy" id="3702"/>
    <lineage>
        <taxon>Eukaryota</taxon>
        <taxon>Viridiplantae</taxon>
        <taxon>Streptophyta</taxon>
        <taxon>Embryophyta</taxon>
        <taxon>Tracheophyta</taxon>
        <taxon>Spermatophyta</taxon>
        <taxon>Magnoliopsida</taxon>
        <taxon>eudicotyledons</taxon>
        <taxon>Gunneridae</taxon>
        <taxon>Pentapetalae</taxon>
        <taxon>rosids</taxon>
        <taxon>malvids</taxon>
        <taxon>Brassicales</taxon>
        <taxon>Brassicaceae</taxon>
        <taxon>Camelineae</taxon>
        <taxon>Arabidopsis</taxon>
    </lineage>
</organism>
<proteinExistence type="evidence at transcript level"/>
<name>GDU6_ARATH</name>
<evidence type="ECO:0000250" key="1"/>
<evidence type="ECO:0000255" key="2"/>
<evidence type="ECO:0000256" key="3">
    <source>
        <dbReference type="SAM" id="MobiDB-lite"/>
    </source>
</evidence>
<evidence type="ECO:0000269" key="4">
    <source>
    </source>
</evidence>
<evidence type="ECO:0000269" key="5">
    <source ref="6"/>
</evidence>
<evidence type="ECO:0000305" key="6"/>
<comment type="function">
    <text evidence="4 5">Probable subunit of an amino acid transporter involved in the regulation of the amino acid metabolism. Stimulates amino acid export by activating nonselective amino acid facilitators.</text>
</comment>
<comment type="subcellular location">
    <subcellularLocation>
        <location evidence="5">Membrane</location>
        <topology evidence="5">Single-pass membrane protein</topology>
    </subcellularLocation>
</comment>
<comment type="tissue specificity">
    <text evidence="4 5">Expressed in the vascular tissues.</text>
</comment>
<comment type="domain">
    <text evidence="1">The VIMAG motif is necessary for the function of the protein.</text>
</comment>
<comment type="miscellaneous">
    <text>Overexpression of GLUTAMINE DUMPER 6 leads to free amino acid levels accumulation and plant size decrease (PubMed:20018597, Ref.6).</text>
</comment>
<comment type="similarity">
    <text evidence="6">Belongs to the GLUTAMINE DUMPER 1 (TC 9.B.60) family.</text>
</comment>
<dbReference type="EMBL" id="AP002066">
    <property type="status" value="NOT_ANNOTATED_CDS"/>
    <property type="molecule type" value="Genomic_DNA"/>
</dbReference>
<dbReference type="EMBL" id="CP002686">
    <property type="protein sequence ID" value="AEE77654.1"/>
    <property type="molecule type" value="Genomic_DNA"/>
</dbReference>
<dbReference type="RefSeq" id="NP_850650.1">
    <property type="nucleotide sequence ID" value="NM_180319.2"/>
</dbReference>
<dbReference type="SMR" id="Q3EAV6"/>
<dbReference type="BioGRID" id="8135">
    <property type="interactions" value="2"/>
</dbReference>
<dbReference type="FunCoup" id="Q3EAV6">
    <property type="interactions" value="1"/>
</dbReference>
<dbReference type="IntAct" id="Q3EAV6">
    <property type="interactions" value="4"/>
</dbReference>
<dbReference type="MINT" id="Q3EAV6"/>
<dbReference type="STRING" id="3702.Q3EAV6"/>
<dbReference type="PaxDb" id="3702-AT3G30725.1"/>
<dbReference type="EnsemblPlants" id="AT3G30725.1">
    <property type="protein sequence ID" value="AT3G30725.1"/>
    <property type="gene ID" value="AT3G30725"/>
</dbReference>
<dbReference type="GeneID" id="822809"/>
<dbReference type="Gramene" id="AT3G30725.1">
    <property type="protein sequence ID" value="AT3G30725.1"/>
    <property type="gene ID" value="AT3G30725"/>
</dbReference>
<dbReference type="KEGG" id="ath:AT3G30725"/>
<dbReference type="Araport" id="AT3G30725"/>
<dbReference type="TAIR" id="AT3G30725">
    <property type="gene designation" value="GDU6"/>
</dbReference>
<dbReference type="eggNOG" id="ENOG502S94S">
    <property type="taxonomic scope" value="Eukaryota"/>
</dbReference>
<dbReference type="HOGENOM" id="CLU_112624_3_0_1"/>
<dbReference type="InParanoid" id="Q3EAV6"/>
<dbReference type="OMA" id="YCSCSSE"/>
<dbReference type="OrthoDB" id="770444at2759"/>
<dbReference type="PhylomeDB" id="Q3EAV6"/>
<dbReference type="PRO" id="PR:Q3EAV6"/>
<dbReference type="Proteomes" id="UP000006548">
    <property type="component" value="Chromosome 3"/>
</dbReference>
<dbReference type="ExpressionAtlas" id="Q3EAV6">
    <property type="expression patterns" value="baseline and differential"/>
</dbReference>
<dbReference type="GO" id="GO:0016020">
    <property type="term" value="C:membrane"/>
    <property type="evidence" value="ECO:0007669"/>
    <property type="project" value="UniProtKB-SubCell"/>
</dbReference>
<dbReference type="GO" id="GO:0006865">
    <property type="term" value="P:amino acid transport"/>
    <property type="evidence" value="ECO:0007669"/>
    <property type="project" value="UniProtKB-KW"/>
</dbReference>
<dbReference type="GO" id="GO:0080143">
    <property type="term" value="P:regulation of amino acid export"/>
    <property type="evidence" value="ECO:0000315"/>
    <property type="project" value="TAIR"/>
</dbReference>
<dbReference type="InterPro" id="IPR040359">
    <property type="entry name" value="GDU"/>
</dbReference>
<dbReference type="PANTHER" id="PTHR33228">
    <property type="entry name" value="PROTEIN GLUTAMINE DUMPER 4-RELATED"/>
    <property type="match status" value="1"/>
</dbReference>
<dbReference type="PANTHER" id="PTHR33228:SF75">
    <property type="entry name" value="PROTEIN GLUTAMINE DUMPER 6"/>
    <property type="match status" value="1"/>
</dbReference>
<keyword id="KW-0029">Amino-acid transport</keyword>
<keyword id="KW-0472">Membrane</keyword>
<keyword id="KW-1185">Reference proteome</keyword>
<keyword id="KW-0812">Transmembrane</keyword>
<keyword id="KW-1133">Transmembrane helix</keyword>
<keyword id="KW-0813">Transport</keyword>
<protein>
    <recommendedName>
        <fullName>Protein GLUTAMINE DUMPER 6</fullName>
    </recommendedName>
</protein>
<gene>
    <name type="primary">GDU6</name>
    <name type="ordered locus">At3g30725</name>
    <name type="ORF">T4A2.7</name>
</gene>
<sequence>MRPTPKVEIWKSPVPYLFGGLFLLVLLIALALLSLVCTHQKPSSSSNNNHMDEEDDVGDKDAKPITREYLPKIVVILAGDNKPTCLAVPVVVPPPTSIFRCNCDNVTVIST</sequence>
<accession>Q3EAV6</accession>